<protein>
    <recommendedName>
        <fullName evidence="1">Imidazoleglycerol-phosphate dehydratase</fullName>
        <shortName evidence="1">IGPD</shortName>
        <ecNumber evidence="1">4.2.1.19</ecNumber>
    </recommendedName>
</protein>
<proteinExistence type="inferred from homology"/>
<feature type="chain" id="PRO_0000336307" description="Imidazoleglycerol-phosphate dehydratase">
    <location>
        <begin position="1"/>
        <end position="194"/>
    </location>
</feature>
<accession>A5N7Q8</accession>
<gene>
    <name evidence="1" type="primary">hisB</name>
    <name type="ordered locus">CKL_1297</name>
</gene>
<dbReference type="EC" id="4.2.1.19" evidence="1"/>
<dbReference type="EMBL" id="CP000673">
    <property type="protein sequence ID" value="EDK33339.1"/>
    <property type="molecule type" value="Genomic_DNA"/>
</dbReference>
<dbReference type="RefSeq" id="WP_012101684.1">
    <property type="nucleotide sequence ID" value="NC_009706.1"/>
</dbReference>
<dbReference type="SMR" id="A5N7Q8"/>
<dbReference type="STRING" id="431943.CKL_1297"/>
<dbReference type="KEGG" id="ckl:CKL_1297"/>
<dbReference type="eggNOG" id="COG0131">
    <property type="taxonomic scope" value="Bacteria"/>
</dbReference>
<dbReference type="HOGENOM" id="CLU_044308_3_0_9"/>
<dbReference type="UniPathway" id="UPA00031">
    <property type="reaction ID" value="UER00011"/>
</dbReference>
<dbReference type="Proteomes" id="UP000002411">
    <property type="component" value="Chromosome"/>
</dbReference>
<dbReference type="GO" id="GO:0005737">
    <property type="term" value="C:cytoplasm"/>
    <property type="evidence" value="ECO:0007669"/>
    <property type="project" value="UniProtKB-SubCell"/>
</dbReference>
<dbReference type="GO" id="GO:0004424">
    <property type="term" value="F:imidazoleglycerol-phosphate dehydratase activity"/>
    <property type="evidence" value="ECO:0007669"/>
    <property type="project" value="UniProtKB-UniRule"/>
</dbReference>
<dbReference type="GO" id="GO:0000105">
    <property type="term" value="P:L-histidine biosynthetic process"/>
    <property type="evidence" value="ECO:0007669"/>
    <property type="project" value="UniProtKB-UniRule"/>
</dbReference>
<dbReference type="CDD" id="cd07914">
    <property type="entry name" value="IGPD"/>
    <property type="match status" value="1"/>
</dbReference>
<dbReference type="FunFam" id="3.30.230.40:FF:000001">
    <property type="entry name" value="Imidazoleglycerol-phosphate dehydratase HisB"/>
    <property type="match status" value="1"/>
</dbReference>
<dbReference type="FunFam" id="3.30.230.40:FF:000003">
    <property type="entry name" value="Imidazoleglycerol-phosphate dehydratase HisB"/>
    <property type="match status" value="1"/>
</dbReference>
<dbReference type="Gene3D" id="3.30.230.40">
    <property type="entry name" value="Imidazole glycerol phosphate dehydratase, domain 1"/>
    <property type="match status" value="2"/>
</dbReference>
<dbReference type="HAMAP" id="MF_00076">
    <property type="entry name" value="HisB"/>
    <property type="match status" value="1"/>
</dbReference>
<dbReference type="InterPro" id="IPR038494">
    <property type="entry name" value="IGPD_sf"/>
</dbReference>
<dbReference type="InterPro" id="IPR000807">
    <property type="entry name" value="ImidazoleglycerolP_deHydtase"/>
</dbReference>
<dbReference type="InterPro" id="IPR020565">
    <property type="entry name" value="ImidazoleglycerP_deHydtase_CS"/>
</dbReference>
<dbReference type="InterPro" id="IPR020568">
    <property type="entry name" value="Ribosomal_Su5_D2-typ_SF"/>
</dbReference>
<dbReference type="NCBIfam" id="NF002107">
    <property type="entry name" value="PRK00951.1-2"/>
    <property type="match status" value="1"/>
</dbReference>
<dbReference type="NCBIfam" id="NF002109">
    <property type="entry name" value="PRK00951.1-5"/>
    <property type="match status" value="1"/>
</dbReference>
<dbReference type="NCBIfam" id="NF002111">
    <property type="entry name" value="PRK00951.2-1"/>
    <property type="match status" value="1"/>
</dbReference>
<dbReference type="NCBIfam" id="NF002114">
    <property type="entry name" value="PRK00951.2-4"/>
    <property type="match status" value="1"/>
</dbReference>
<dbReference type="PANTHER" id="PTHR23133:SF2">
    <property type="entry name" value="IMIDAZOLEGLYCEROL-PHOSPHATE DEHYDRATASE"/>
    <property type="match status" value="1"/>
</dbReference>
<dbReference type="PANTHER" id="PTHR23133">
    <property type="entry name" value="IMIDAZOLEGLYCEROL-PHOSPHATE DEHYDRATASE HIS7"/>
    <property type="match status" value="1"/>
</dbReference>
<dbReference type="Pfam" id="PF00475">
    <property type="entry name" value="IGPD"/>
    <property type="match status" value="1"/>
</dbReference>
<dbReference type="SUPFAM" id="SSF54211">
    <property type="entry name" value="Ribosomal protein S5 domain 2-like"/>
    <property type="match status" value="2"/>
</dbReference>
<dbReference type="PROSITE" id="PS00954">
    <property type="entry name" value="IGP_DEHYDRATASE_1"/>
    <property type="match status" value="1"/>
</dbReference>
<dbReference type="PROSITE" id="PS00955">
    <property type="entry name" value="IGP_DEHYDRATASE_2"/>
    <property type="match status" value="1"/>
</dbReference>
<evidence type="ECO:0000255" key="1">
    <source>
        <dbReference type="HAMAP-Rule" id="MF_00076"/>
    </source>
</evidence>
<name>HIS7_CLOK5</name>
<sequence length="194" mass="21929">MRIGEISRKTYETDIEVKIDLDGRGKYNIDTGIGFFNHMLCMIAKHGIMDMDVYAKGDLDVDFHHTVEDVGICIGKSIKKALGNKKSIKRYGTFFIPMDESLSMCSVDLSGRPFLVFQGELKNSKVGEMDTELIEEFFRALAFNAEMTLHIKVFYGKNTHHIIESVFKSFAHALREAVSIDEKIEGTMSTKGMI</sequence>
<reference key="1">
    <citation type="journal article" date="2008" name="Proc. Natl. Acad. Sci. U.S.A.">
        <title>The genome of Clostridium kluyveri, a strict anaerobe with unique metabolic features.</title>
        <authorList>
            <person name="Seedorf H."/>
            <person name="Fricke W.F."/>
            <person name="Veith B."/>
            <person name="Brueggemann H."/>
            <person name="Liesegang H."/>
            <person name="Strittmatter A."/>
            <person name="Miethke M."/>
            <person name="Buckel W."/>
            <person name="Hinderberger J."/>
            <person name="Li F."/>
            <person name="Hagemeier C."/>
            <person name="Thauer R.K."/>
            <person name="Gottschalk G."/>
        </authorList>
    </citation>
    <scope>NUCLEOTIDE SEQUENCE [LARGE SCALE GENOMIC DNA]</scope>
    <source>
        <strain>ATCC 8527 / DSM 555 / NBRC 12016 / NCIMB 10680 / K1</strain>
    </source>
</reference>
<keyword id="KW-0028">Amino-acid biosynthesis</keyword>
<keyword id="KW-0963">Cytoplasm</keyword>
<keyword id="KW-0368">Histidine biosynthesis</keyword>
<keyword id="KW-0456">Lyase</keyword>
<keyword id="KW-1185">Reference proteome</keyword>
<organism>
    <name type="scientific">Clostridium kluyveri (strain ATCC 8527 / DSM 555 / NBRC 12016 / NCIMB 10680 / K1)</name>
    <dbReference type="NCBI Taxonomy" id="431943"/>
    <lineage>
        <taxon>Bacteria</taxon>
        <taxon>Bacillati</taxon>
        <taxon>Bacillota</taxon>
        <taxon>Clostridia</taxon>
        <taxon>Eubacteriales</taxon>
        <taxon>Clostridiaceae</taxon>
        <taxon>Clostridium</taxon>
    </lineage>
</organism>
<comment type="catalytic activity">
    <reaction evidence="1">
        <text>D-erythro-1-(imidazol-4-yl)glycerol 3-phosphate = 3-(imidazol-4-yl)-2-oxopropyl phosphate + H2O</text>
        <dbReference type="Rhea" id="RHEA:11040"/>
        <dbReference type="ChEBI" id="CHEBI:15377"/>
        <dbReference type="ChEBI" id="CHEBI:57766"/>
        <dbReference type="ChEBI" id="CHEBI:58278"/>
        <dbReference type="EC" id="4.2.1.19"/>
    </reaction>
</comment>
<comment type="pathway">
    <text evidence="1">Amino-acid biosynthesis; L-histidine biosynthesis; L-histidine from 5-phospho-alpha-D-ribose 1-diphosphate: step 6/9.</text>
</comment>
<comment type="subcellular location">
    <subcellularLocation>
        <location evidence="1">Cytoplasm</location>
    </subcellularLocation>
</comment>
<comment type="similarity">
    <text evidence="1">Belongs to the imidazoleglycerol-phosphate dehydratase family.</text>
</comment>